<reference key="1">
    <citation type="journal article" date="2005" name="Plant Mol. Biol.">
        <title>Identification and characterisation of the alpha and beta subunits of succinyl CoA ligase of tomato.</title>
        <authorList>
            <person name="Studart-Guimaraes C."/>
            <person name="Gibon Y."/>
            <person name="Frankel N."/>
            <person name="Wood C.C."/>
            <person name="Zanor M.I."/>
            <person name="Fernie A.R."/>
            <person name="Carrari F."/>
        </authorList>
    </citation>
    <scope>NUCLEOTIDE SEQUENCE [MRNA]</scope>
    <scope>CATALYTIC ACTIVITY</scope>
    <scope>SUBCELLULAR LOCATION</scope>
    <scope>TISSUE SPECIFICITY</scope>
    <source>
        <strain>cv. Moneymaker</strain>
        <tissue>Root</tissue>
    </source>
</reference>
<evidence type="ECO:0000255" key="1">
    <source>
        <dbReference type="HAMAP-Rule" id="MF_03222"/>
    </source>
</evidence>
<evidence type="ECO:0000269" key="2">
    <source>
    </source>
</evidence>
<keyword id="KW-0436">Ligase</keyword>
<keyword id="KW-0496">Mitochondrion</keyword>
<keyword id="KW-0547">Nucleotide-binding</keyword>
<keyword id="KW-1185">Reference proteome</keyword>
<keyword id="KW-0809">Transit peptide</keyword>
<keyword id="KW-0816">Tricarboxylic acid cycle</keyword>
<dbReference type="EC" id="6.2.1.5" evidence="1"/>
<dbReference type="EMBL" id="AY650029">
    <property type="protein sequence ID" value="AAT67464.1"/>
    <property type="molecule type" value="mRNA"/>
</dbReference>
<dbReference type="RefSeq" id="NP_001234574.1">
    <property type="nucleotide sequence ID" value="NM_001247645.2"/>
</dbReference>
<dbReference type="SMR" id="Q6DQL1"/>
<dbReference type="FunCoup" id="Q6DQL1">
    <property type="interactions" value="3227"/>
</dbReference>
<dbReference type="STRING" id="4081.Q6DQL1"/>
<dbReference type="PaxDb" id="4081-Solyc02g005350.2.1"/>
<dbReference type="GeneID" id="543943"/>
<dbReference type="KEGG" id="sly:543943"/>
<dbReference type="eggNOG" id="KOG1255">
    <property type="taxonomic scope" value="Eukaryota"/>
</dbReference>
<dbReference type="InParanoid" id="Q6DQL1"/>
<dbReference type="OrthoDB" id="1664372at2759"/>
<dbReference type="UniPathway" id="UPA00223">
    <property type="reaction ID" value="UER00999"/>
</dbReference>
<dbReference type="Proteomes" id="UP000004994">
    <property type="component" value="Unplaced"/>
</dbReference>
<dbReference type="ExpressionAtlas" id="Q6DQL1">
    <property type="expression patterns" value="baseline and differential"/>
</dbReference>
<dbReference type="GO" id="GO:0005739">
    <property type="term" value="C:mitochondrion"/>
    <property type="evidence" value="ECO:0000314"/>
    <property type="project" value="UniProtKB"/>
</dbReference>
<dbReference type="GO" id="GO:0009361">
    <property type="term" value="C:succinate-CoA ligase complex (ADP-forming)"/>
    <property type="evidence" value="ECO:0000318"/>
    <property type="project" value="GO_Central"/>
</dbReference>
<dbReference type="GO" id="GO:0000166">
    <property type="term" value="F:nucleotide binding"/>
    <property type="evidence" value="ECO:0007669"/>
    <property type="project" value="UniProtKB-KW"/>
</dbReference>
<dbReference type="GO" id="GO:0004775">
    <property type="term" value="F:succinate-CoA ligase (ADP-forming) activity"/>
    <property type="evidence" value="ECO:0000314"/>
    <property type="project" value="UniProtKB"/>
</dbReference>
<dbReference type="GO" id="GO:0004776">
    <property type="term" value="F:succinate-CoA ligase (GDP-forming) activity"/>
    <property type="evidence" value="ECO:0000318"/>
    <property type="project" value="GO_Central"/>
</dbReference>
<dbReference type="GO" id="GO:0006105">
    <property type="term" value="P:succinate metabolic process"/>
    <property type="evidence" value="ECO:0000314"/>
    <property type="project" value="UniProtKB"/>
</dbReference>
<dbReference type="GO" id="GO:0006104">
    <property type="term" value="P:succinyl-CoA metabolic process"/>
    <property type="evidence" value="ECO:0000314"/>
    <property type="project" value="UniProtKB"/>
</dbReference>
<dbReference type="GO" id="GO:0006099">
    <property type="term" value="P:tricarboxylic acid cycle"/>
    <property type="evidence" value="ECO:0000314"/>
    <property type="project" value="UniProtKB"/>
</dbReference>
<dbReference type="FunFam" id="3.40.50.720:FF:000002">
    <property type="entry name" value="Succinate--CoA ligase [ADP-forming] subunit alpha"/>
    <property type="match status" value="1"/>
</dbReference>
<dbReference type="FunFam" id="3.40.50.261:FF:000005">
    <property type="entry name" value="Succinate--CoA ligase [ADP-forming] subunit alpha, mitochondrial"/>
    <property type="match status" value="1"/>
</dbReference>
<dbReference type="Gene3D" id="3.40.50.720">
    <property type="entry name" value="NAD(P)-binding Rossmann-like Domain"/>
    <property type="match status" value="1"/>
</dbReference>
<dbReference type="Gene3D" id="3.40.50.261">
    <property type="entry name" value="Succinyl-CoA synthetase domains"/>
    <property type="match status" value="1"/>
</dbReference>
<dbReference type="HAMAP" id="MF_01988">
    <property type="entry name" value="Succ_CoA_alpha"/>
    <property type="match status" value="1"/>
</dbReference>
<dbReference type="InterPro" id="IPR017440">
    <property type="entry name" value="Cit_synth/succinyl-CoA_lig_AS"/>
</dbReference>
<dbReference type="InterPro" id="IPR033847">
    <property type="entry name" value="Citrt_syn/SCS-alpha_CS"/>
</dbReference>
<dbReference type="InterPro" id="IPR003781">
    <property type="entry name" value="CoA-bd"/>
</dbReference>
<dbReference type="InterPro" id="IPR005810">
    <property type="entry name" value="CoA_lig_alpha"/>
</dbReference>
<dbReference type="InterPro" id="IPR036291">
    <property type="entry name" value="NAD(P)-bd_dom_sf"/>
</dbReference>
<dbReference type="InterPro" id="IPR005811">
    <property type="entry name" value="SUCC_ACL_C"/>
</dbReference>
<dbReference type="InterPro" id="IPR016102">
    <property type="entry name" value="Succinyl-CoA_synth-like"/>
</dbReference>
<dbReference type="NCBIfam" id="NF004230">
    <property type="entry name" value="PRK05678.1"/>
    <property type="match status" value="1"/>
</dbReference>
<dbReference type="NCBIfam" id="TIGR01019">
    <property type="entry name" value="sucCoAalpha"/>
    <property type="match status" value="1"/>
</dbReference>
<dbReference type="PANTHER" id="PTHR11117:SF23">
    <property type="entry name" value="SUCCINATE--COA LIGASE [ADP-FORMING] SUBUNIT ALPHA-2, MITOCHONDRIAL"/>
    <property type="match status" value="1"/>
</dbReference>
<dbReference type="PANTHER" id="PTHR11117">
    <property type="entry name" value="SUCCINYL-COA LIGASE SUBUNIT ALPHA"/>
    <property type="match status" value="1"/>
</dbReference>
<dbReference type="Pfam" id="PF02629">
    <property type="entry name" value="CoA_binding"/>
    <property type="match status" value="1"/>
</dbReference>
<dbReference type="Pfam" id="PF00549">
    <property type="entry name" value="Ligase_CoA"/>
    <property type="match status" value="1"/>
</dbReference>
<dbReference type="PIRSF" id="PIRSF001553">
    <property type="entry name" value="SucCS_alpha"/>
    <property type="match status" value="1"/>
</dbReference>
<dbReference type="PRINTS" id="PR01798">
    <property type="entry name" value="SCOASYNTHASE"/>
</dbReference>
<dbReference type="SMART" id="SM00881">
    <property type="entry name" value="CoA_binding"/>
    <property type="match status" value="1"/>
</dbReference>
<dbReference type="SUPFAM" id="SSF51735">
    <property type="entry name" value="NAD(P)-binding Rossmann-fold domains"/>
    <property type="match status" value="1"/>
</dbReference>
<dbReference type="SUPFAM" id="SSF52210">
    <property type="entry name" value="Succinyl-CoA synthetase domains"/>
    <property type="match status" value="1"/>
</dbReference>
<dbReference type="PROSITE" id="PS01216">
    <property type="entry name" value="SUCCINYL_COA_LIG_1"/>
    <property type="match status" value="1"/>
</dbReference>
<dbReference type="PROSITE" id="PS00399">
    <property type="entry name" value="SUCCINYL_COA_LIG_2"/>
    <property type="match status" value="1"/>
</dbReference>
<organism>
    <name type="scientific">Solanum lycopersicum</name>
    <name type="common">Tomato</name>
    <name type="synonym">Lycopersicon esculentum</name>
    <dbReference type="NCBI Taxonomy" id="4081"/>
    <lineage>
        <taxon>Eukaryota</taxon>
        <taxon>Viridiplantae</taxon>
        <taxon>Streptophyta</taxon>
        <taxon>Embryophyta</taxon>
        <taxon>Tracheophyta</taxon>
        <taxon>Spermatophyta</taxon>
        <taxon>Magnoliopsida</taxon>
        <taxon>eudicotyledons</taxon>
        <taxon>Gunneridae</taxon>
        <taxon>Pentapetalae</taxon>
        <taxon>asterids</taxon>
        <taxon>lamiids</taxon>
        <taxon>Solanales</taxon>
        <taxon>Solanaceae</taxon>
        <taxon>Solanoideae</taxon>
        <taxon>Solaneae</taxon>
        <taxon>Solanum</taxon>
        <taxon>Solanum subgen. Lycopersicon</taxon>
    </lineage>
</organism>
<proteinExistence type="evidence at protein level"/>
<sequence length="337" mass="35375">MARQATRLISNLSTKLNPSSPTMSASPLWHQYRYFGSPPPPPAVFVDKNTRVICQGITGKNGTFHTEQAIEYGTKMVGGVTPKKGGTEHLGLPVFNTVAEAKVETKANASVVYVPPPFAAAAIMEAMEAELDLVVCITEGIPQHDMVRVKAALKKQLRTRLIGPNCPGIIKPGECKIGIMPGYIHKPGRIGIVSRSGTLTYEAVFQTTAVGLGQSTCVGIGGDPFNGTNFVDCLERFIADPQTEGIVLIGEIGGTAEEDAAALIKESGTQKPVVAFIAGLTAPPGRRMGHAGAIVSGGKGTAQDKIKALKEAGVTVCESPAKIGVTMLDVFKQRGLA</sequence>
<feature type="transit peptide" description="Mitochondrion" evidence="1">
    <location>
        <begin position="1"/>
        <end position="35"/>
    </location>
</feature>
<feature type="chain" id="PRO_0000402565" description="Succinate--CoA ligase [ADP-forming] subunit alpha-2, mitochondrial">
    <location>
        <begin position="36"/>
        <end position="337"/>
    </location>
</feature>
<feature type="active site" description="Tele-phosphohistidine intermediate" evidence="1">
    <location>
        <position position="290"/>
    </location>
</feature>
<feature type="binding site" evidence="1">
    <location>
        <begin position="58"/>
        <end position="61"/>
    </location>
    <ligand>
        <name>CoA</name>
        <dbReference type="ChEBI" id="CHEBI:57287"/>
    </ligand>
</feature>
<feature type="binding site" evidence="1">
    <location>
        <position position="84"/>
    </location>
    <ligand>
        <name>CoA</name>
        <dbReference type="ChEBI" id="CHEBI:57287"/>
    </ligand>
</feature>
<feature type="binding site" evidence="1">
    <location>
        <begin position="137"/>
        <end position="139"/>
    </location>
    <ligand>
        <name>CoA</name>
        <dbReference type="ChEBI" id="CHEBI:57287"/>
    </ligand>
</feature>
<feature type="binding site" evidence="1">
    <location>
        <position position="201"/>
    </location>
    <ligand>
        <name>substrate</name>
        <note>ligand shared with subunit beta</note>
    </ligand>
</feature>
<accession>Q6DQL1</accession>
<name>SUCA2_SOLLC</name>
<protein>
    <recommendedName>
        <fullName evidence="1">Succinate--CoA ligase [ADP-forming] subunit alpha-2, mitochondrial</fullName>
        <ecNumber evidence="1">6.2.1.5</ecNumber>
    </recommendedName>
    <alternativeName>
        <fullName evidence="1">Succinyl-CoA synthetase subunit alpha-2</fullName>
        <shortName evidence="1">SCS-alpha-2</shortName>
    </alternativeName>
</protein>
<comment type="function">
    <text evidence="1">Succinyl-CoA synthetase functions in the citric acid cycle (TCA), coupling the hydrolysis of succinyl-CoA to the synthesis of ATP and thus represents the only step of substrate-level phosphorylation in the TCA. The alpha subunit of the enzyme binds the substrates coenzyme A and phosphate, while succinate binding and nucleotide specificity is provided by the beta subunit.</text>
</comment>
<comment type="catalytic activity">
    <reaction evidence="1 2">
        <text>succinate + ATP + CoA = succinyl-CoA + ADP + phosphate</text>
        <dbReference type="Rhea" id="RHEA:17661"/>
        <dbReference type="ChEBI" id="CHEBI:30031"/>
        <dbReference type="ChEBI" id="CHEBI:30616"/>
        <dbReference type="ChEBI" id="CHEBI:43474"/>
        <dbReference type="ChEBI" id="CHEBI:57287"/>
        <dbReference type="ChEBI" id="CHEBI:57292"/>
        <dbReference type="ChEBI" id="CHEBI:456216"/>
        <dbReference type="EC" id="6.2.1.5"/>
    </reaction>
</comment>
<comment type="pathway">
    <text evidence="1">Carbohydrate metabolism; tricarboxylic acid cycle; succinate from succinyl-CoA (ligase route): step 1/1.</text>
</comment>
<comment type="subunit">
    <text evidence="1">Heterodimer of an alpha and a beta subunit.</text>
</comment>
<comment type="subcellular location">
    <subcellularLocation>
        <location evidence="1 2">Mitochondrion</location>
    </subcellularLocation>
</comment>
<comment type="tissue specificity">
    <text evidence="2">Expressed in roots, stems, flowers, leaves and fruits.</text>
</comment>
<comment type="similarity">
    <text evidence="1">Belongs to the succinate/malate CoA ligase alpha subunit family.</text>
</comment>